<accession>P0ACK5</accession>
<accession>P06217</accession>
<evidence type="ECO:0000255" key="1">
    <source>
        <dbReference type="PROSITE-ProRule" id="PRU00349"/>
    </source>
</evidence>
<evidence type="ECO:0000305" key="2">
    <source>
    </source>
</evidence>
<evidence type="ECO:0007829" key="3">
    <source>
        <dbReference type="PDB" id="7L6L"/>
    </source>
</evidence>
<comment type="function">
    <text>This protein is one of the repressors that regulate the expression of deoCABD genes, which encode nucleotide and deoxy ribonucleotide catabolizing enzymes. It also negatively regulates the expression of nupG (a transport protein) and tsx (a pore-forming protein). The inducer is deoxyribose-5-phosphate.</text>
</comment>
<comment type="subunit">
    <text evidence="2">Homooctamer.</text>
</comment>
<keyword id="KW-0002">3D-structure</keyword>
<keyword id="KW-0238">DNA-binding</keyword>
<keyword id="KW-1185">Reference proteome</keyword>
<keyword id="KW-0678">Repressor</keyword>
<keyword id="KW-0804">Transcription</keyword>
<keyword id="KW-0805">Transcription regulation</keyword>
<gene>
    <name type="primary">deoR</name>
    <name type="synonym">nucR</name>
    <name type="ordered locus">b0840</name>
    <name type="ordered locus">JW0824</name>
</gene>
<dbReference type="EMBL" id="X02837">
    <property type="protein sequence ID" value="CAA26598.1"/>
    <property type="molecule type" value="Genomic_DNA"/>
</dbReference>
<dbReference type="EMBL" id="U00096">
    <property type="protein sequence ID" value="AAC73927.1"/>
    <property type="molecule type" value="Genomic_DNA"/>
</dbReference>
<dbReference type="EMBL" id="AP009048">
    <property type="protein sequence ID" value="BAA35543.1"/>
    <property type="molecule type" value="Genomic_DNA"/>
</dbReference>
<dbReference type="PIR" id="A24076">
    <property type="entry name" value="RPECDO"/>
</dbReference>
<dbReference type="RefSeq" id="NP_415361.1">
    <property type="nucleotide sequence ID" value="NC_000913.3"/>
</dbReference>
<dbReference type="RefSeq" id="WP_000450121.1">
    <property type="nucleotide sequence ID" value="NZ_STEB01000019.1"/>
</dbReference>
<dbReference type="PDB" id="7L6L">
    <property type="method" value="X-ray"/>
    <property type="resolution" value="1.75 A"/>
    <property type="chains" value="A/B/C/D/E/F=70-252"/>
</dbReference>
<dbReference type="PDBsum" id="7L6L"/>
<dbReference type="SMR" id="P0ACK5"/>
<dbReference type="BioGRID" id="4262826">
    <property type="interactions" value="140"/>
</dbReference>
<dbReference type="DIP" id="DIP-9430N"/>
<dbReference type="FunCoup" id="P0ACK5">
    <property type="interactions" value="23"/>
</dbReference>
<dbReference type="IntAct" id="P0ACK5">
    <property type="interactions" value="4"/>
</dbReference>
<dbReference type="STRING" id="511145.b0840"/>
<dbReference type="jPOST" id="P0ACK5"/>
<dbReference type="PaxDb" id="511145-b0840"/>
<dbReference type="EnsemblBacteria" id="AAC73927">
    <property type="protein sequence ID" value="AAC73927"/>
    <property type="gene ID" value="b0840"/>
</dbReference>
<dbReference type="GeneID" id="75170909"/>
<dbReference type="GeneID" id="945453"/>
<dbReference type="KEGG" id="ecj:JW0824"/>
<dbReference type="KEGG" id="eco:b0840"/>
<dbReference type="KEGG" id="ecoc:C3026_05255"/>
<dbReference type="PATRIC" id="fig|1411691.4.peg.1438"/>
<dbReference type="EchoBASE" id="EB0219"/>
<dbReference type="eggNOG" id="COG1349">
    <property type="taxonomic scope" value="Bacteria"/>
</dbReference>
<dbReference type="HOGENOM" id="CLU_060699_4_0_6"/>
<dbReference type="InParanoid" id="P0ACK5"/>
<dbReference type="OMA" id="CFHFHEV"/>
<dbReference type="OrthoDB" id="9797223at2"/>
<dbReference type="PhylomeDB" id="P0ACK5"/>
<dbReference type="BioCyc" id="EcoCyc:PD01196"/>
<dbReference type="PRO" id="PR:P0ACK5"/>
<dbReference type="Proteomes" id="UP000000625">
    <property type="component" value="Chromosome"/>
</dbReference>
<dbReference type="GO" id="GO:0000987">
    <property type="term" value="F:cis-regulatory region sequence-specific DNA binding"/>
    <property type="evidence" value="ECO:0000314"/>
    <property type="project" value="EcoCyc"/>
</dbReference>
<dbReference type="GO" id="GO:0098531">
    <property type="term" value="F:ligand-modulated transcription factor activity"/>
    <property type="evidence" value="ECO:0000318"/>
    <property type="project" value="GO_Central"/>
</dbReference>
<dbReference type="GO" id="GO:2000143">
    <property type="term" value="P:negative regulation of DNA-templated transcription initiation"/>
    <property type="evidence" value="ECO:0000315"/>
    <property type="project" value="EcoCyc"/>
</dbReference>
<dbReference type="GO" id="GO:0006355">
    <property type="term" value="P:regulation of DNA-templated transcription"/>
    <property type="evidence" value="ECO:0000318"/>
    <property type="project" value="GO_Central"/>
</dbReference>
<dbReference type="FunFam" id="3.40.50.1360:FF:000011">
    <property type="entry name" value="Deoxyribose operon repressor"/>
    <property type="match status" value="1"/>
</dbReference>
<dbReference type="Gene3D" id="3.40.50.1360">
    <property type="match status" value="1"/>
</dbReference>
<dbReference type="InterPro" id="IPR050313">
    <property type="entry name" value="Carb_Metab_HTH_regulators"/>
</dbReference>
<dbReference type="InterPro" id="IPR014036">
    <property type="entry name" value="DeoR-like_C"/>
</dbReference>
<dbReference type="InterPro" id="IPR001034">
    <property type="entry name" value="DeoR_HTH"/>
</dbReference>
<dbReference type="InterPro" id="IPR037171">
    <property type="entry name" value="NagB/RpiA_transferase-like"/>
</dbReference>
<dbReference type="InterPro" id="IPR018356">
    <property type="entry name" value="Tscrpt_reg_HTH_DeoR_CS"/>
</dbReference>
<dbReference type="NCBIfam" id="NF007961">
    <property type="entry name" value="PRK10681.1"/>
    <property type="match status" value="1"/>
</dbReference>
<dbReference type="PANTHER" id="PTHR30363:SF8">
    <property type="entry name" value="DEOXYRIBOSE OPERON REPRESSOR"/>
    <property type="match status" value="1"/>
</dbReference>
<dbReference type="PANTHER" id="PTHR30363">
    <property type="entry name" value="HTH-TYPE TRANSCRIPTIONAL REGULATOR SRLR-RELATED"/>
    <property type="match status" value="1"/>
</dbReference>
<dbReference type="Pfam" id="PF00455">
    <property type="entry name" value="DeoRC"/>
    <property type="match status" value="1"/>
</dbReference>
<dbReference type="Pfam" id="PF08220">
    <property type="entry name" value="HTH_DeoR"/>
    <property type="match status" value="1"/>
</dbReference>
<dbReference type="SMART" id="SM01134">
    <property type="entry name" value="DeoRC"/>
    <property type="match status" value="1"/>
</dbReference>
<dbReference type="SMART" id="SM00420">
    <property type="entry name" value="HTH_DEOR"/>
    <property type="match status" value="1"/>
</dbReference>
<dbReference type="SUPFAM" id="SSF100950">
    <property type="entry name" value="NagB/RpiA/CoA transferase-like"/>
    <property type="match status" value="1"/>
</dbReference>
<dbReference type="PROSITE" id="PS00894">
    <property type="entry name" value="HTH_DEOR_1"/>
    <property type="match status" value="1"/>
</dbReference>
<dbReference type="PROSITE" id="PS51000">
    <property type="entry name" value="HTH_DEOR_2"/>
    <property type="match status" value="1"/>
</dbReference>
<organism>
    <name type="scientific">Escherichia coli (strain K12)</name>
    <dbReference type="NCBI Taxonomy" id="83333"/>
    <lineage>
        <taxon>Bacteria</taxon>
        <taxon>Pseudomonadati</taxon>
        <taxon>Pseudomonadota</taxon>
        <taxon>Gammaproteobacteria</taxon>
        <taxon>Enterobacterales</taxon>
        <taxon>Enterobacteriaceae</taxon>
        <taxon>Escherichia</taxon>
    </lineage>
</organism>
<sequence length="252" mass="28548">METRREERIGQLLQELKRSDKLHLKDAAALLGVSEMTIRRDLNNHSAPVVLLGGYIVLEPRSASHYLLSDQKSRLVEEKRRAAKLAATLVEPDQTLFFDCGTTTPWIIEAIDNEIPFTAVCYSLNTFLALKEKPHCRAFLCGGEFHASNAIFKPIDFQQTLNNFCPDIAFYSAAGVHVSKGATCFNLEELPVKHWAMSMAQKHVLVVDHSKFGKVRPARMGDLKRFDIVVSDCCPEDEYVKYAQTQRIKLMY</sequence>
<name>DEOR_ECOLI</name>
<reference key="1">
    <citation type="journal article" date="1985" name="Nucleic Acids Res.">
        <title>The primary structure of the DeoR repressor from Escherichia coli K-12.</title>
        <authorList>
            <person name="Valentin-Hansen P."/>
            <person name="Hoejrup P."/>
            <person name="Short S."/>
        </authorList>
    </citation>
    <scope>NUCLEOTIDE SEQUENCE [GENOMIC DNA]</scope>
    <source>
        <strain>K12</strain>
    </source>
</reference>
<reference key="2">
    <citation type="journal article" date="1996" name="DNA Res.">
        <title>A 718-kb DNA sequence of the Escherichia coli K-12 genome corresponding to the 12.7-28.0 min region on the linkage map.</title>
        <authorList>
            <person name="Oshima T."/>
            <person name="Aiba H."/>
            <person name="Baba T."/>
            <person name="Fujita K."/>
            <person name="Hayashi K."/>
            <person name="Honjo A."/>
            <person name="Ikemoto K."/>
            <person name="Inada T."/>
            <person name="Itoh T."/>
            <person name="Kajihara M."/>
            <person name="Kanai K."/>
            <person name="Kashimoto K."/>
            <person name="Kimura S."/>
            <person name="Kitagawa M."/>
            <person name="Makino K."/>
            <person name="Masuda S."/>
            <person name="Miki T."/>
            <person name="Mizobuchi K."/>
            <person name="Mori H."/>
            <person name="Motomura K."/>
            <person name="Nakamura Y."/>
            <person name="Nashimoto H."/>
            <person name="Nishio Y."/>
            <person name="Saito N."/>
            <person name="Sampei G."/>
            <person name="Seki Y."/>
            <person name="Tagami H."/>
            <person name="Takemoto K."/>
            <person name="Wada C."/>
            <person name="Yamamoto Y."/>
            <person name="Yano M."/>
            <person name="Horiuchi T."/>
        </authorList>
    </citation>
    <scope>NUCLEOTIDE SEQUENCE [LARGE SCALE GENOMIC DNA]</scope>
    <source>
        <strain>K12 / W3110 / ATCC 27325 / DSM 5911</strain>
    </source>
</reference>
<reference key="3">
    <citation type="journal article" date="1997" name="Science">
        <title>The complete genome sequence of Escherichia coli K-12.</title>
        <authorList>
            <person name="Blattner F.R."/>
            <person name="Plunkett G. III"/>
            <person name="Bloch C.A."/>
            <person name="Perna N.T."/>
            <person name="Burland V."/>
            <person name="Riley M."/>
            <person name="Collado-Vides J."/>
            <person name="Glasner J.D."/>
            <person name="Rode C.K."/>
            <person name="Mayhew G.F."/>
            <person name="Gregor J."/>
            <person name="Davis N.W."/>
            <person name="Kirkpatrick H.A."/>
            <person name="Goeden M.A."/>
            <person name="Rose D.J."/>
            <person name="Mau B."/>
            <person name="Shao Y."/>
        </authorList>
    </citation>
    <scope>NUCLEOTIDE SEQUENCE [LARGE SCALE GENOMIC DNA]</scope>
    <source>
        <strain>K12 / MG1655 / ATCC 47076</strain>
    </source>
</reference>
<reference key="4">
    <citation type="journal article" date="2006" name="Mol. Syst. Biol.">
        <title>Highly accurate genome sequences of Escherichia coli K-12 strains MG1655 and W3110.</title>
        <authorList>
            <person name="Hayashi K."/>
            <person name="Morooka N."/>
            <person name="Yamamoto Y."/>
            <person name="Fujita K."/>
            <person name="Isono K."/>
            <person name="Choi S."/>
            <person name="Ohtsubo E."/>
            <person name="Baba T."/>
            <person name="Wanner B.L."/>
            <person name="Mori H."/>
            <person name="Horiuchi T."/>
        </authorList>
    </citation>
    <scope>NUCLEOTIDE SEQUENCE [LARGE SCALE GENOMIC DNA]</scope>
    <source>
        <strain>K12 / W3110 / ATCC 27325 / DSM 5911</strain>
    </source>
</reference>
<reference key="5">
    <citation type="journal article" date="1989" name="EMBO J.">
        <title>Purification and characterization of the deoR repressor of Escherichia coli.</title>
        <authorList>
            <person name="Mortensen L."/>
            <person name="Dandanell G."/>
            <person name="Hammer K."/>
        </authorList>
    </citation>
    <scope>SUBUNIT</scope>
</reference>
<feature type="chain" id="PRO_0000050244" description="Deoxyribose operon repressor">
    <location>
        <begin position="1"/>
        <end position="252"/>
    </location>
</feature>
<feature type="domain" description="HTH deoR-type" evidence="1">
    <location>
        <begin position="5"/>
        <end position="57"/>
    </location>
</feature>
<feature type="DNA-binding region" description="H-T-H motif" evidence="1">
    <location>
        <begin position="22"/>
        <end position="41"/>
    </location>
</feature>
<feature type="helix" evidence="3">
    <location>
        <begin position="76"/>
        <end position="87"/>
    </location>
</feature>
<feature type="strand" evidence="3">
    <location>
        <begin position="95"/>
        <end position="98"/>
    </location>
</feature>
<feature type="strand" evidence="3">
    <location>
        <begin position="100"/>
        <end position="103"/>
    </location>
</feature>
<feature type="helix" evidence="3">
    <location>
        <begin position="104"/>
        <end position="110"/>
    </location>
</feature>
<feature type="strand" evidence="3">
    <location>
        <begin position="117"/>
        <end position="121"/>
    </location>
</feature>
<feature type="helix" evidence="3">
    <location>
        <begin position="124"/>
        <end position="131"/>
    </location>
</feature>
<feature type="strand" evidence="3">
    <location>
        <begin position="136"/>
        <end position="140"/>
    </location>
</feature>
<feature type="strand" evidence="3">
    <location>
        <begin position="143"/>
        <end position="146"/>
    </location>
</feature>
<feature type="helix" evidence="3">
    <location>
        <begin position="148"/>
        <end position="150"/>
    </location>
</feature>
<feature type="strand" evidence="3">
    <location>
        <begin position="151"/>
        <end position="153"/>
    </location>
</feature>
<feature type="helix" evidence="3">
    <location>
        <begin position="161"/>
        <end position="163"/>
    </location>
</feature>
<feature type="strand" evidence="3">
    <location>
        <begin position="167"/>
        <end position="171"/>
    </location>
</feature>
<feature type="strand" evidence="3">
    <location>
        <begin position="174"/>
        <end position="177"/>
    </location>
</feature>
<feature type="turn" evidence="3">
    <location>
        <begin position="178"/>
        <end position="180"/>
    </location>
</feature>
<feature type="strand" evidence="3">
    <location>
        <begin position="181"/>
        <end position="185"/>
    </location>
</feature>
<feature type="helix" evidence="3">
    <location>
        <begin position="187"/>
        <end position="189"/>
    </location>
</feature>
<feature type="helix" evidence="3">
    <location>
        <begin position="190"/>
        <end position="199"/>
    </location>
</feature>
<feature type="strand" evidence="3">
    <location>
        <begin position="201"/>
        <end position="206"/>
    </location>
</feature>
<feature type="helix" evidence="3">
    <location>
        <begin position="209"/>
        <end position="211"/>
    </location>
</feature>
<feature type="strand" evidence="3">
    <location>
        <begin position="217"/>
        <end position="221"/>
    </location>
</feature>
<feature type="helix" evidence="3">
    <location>
        <begin position="223"/>
        <end position="225"/>
    </location>
</feature>
<feature type="strand" evidence="3">
    <location>
        <begin position="227"/>
        <end position="230"/>
    </location>
</feature>
<feature type="helix" evidence="3">
    <location>
        <begin position="237"/>
        <end position="246"/>
    </location>
</feature>
<feature type="strand" evidence="3">
    <location>
        <begin position="249"/>
        <end position="251"/>
    </location>
</feature>
<proteinExistence type="evidence at protein level"/>
<protein>
    <recommendedName>
        <fullName>Deoxyribose operon repressor</fullName>
    </recommendedName>
</protein>